<name>UREE_BURCM</name>
<comment type="function">
    <text evidence="1">Involved in urease metallocenter assembly. Binds nickel. Probably functions as a nickel donor during metallocenter assembly.</text>
</comment>
<comment type="subcellular location">
    <subcellularLocation>
        <location evidence="1">Cytoplasm</location>
    </subcellularLocation>
</comment>
<comment type="similarity">
    <text evidence="1">Belongs to the UreE family.</text>
</comment>
<feature type="chain" id="PRO_1000083876" description="Urease accessory protein UreE">
    <location>
        <begin position="1"/>
        <end position="202"/>
    </location>
</feature>
<feature type="region of interest" description="Disordered" evidence="2">
    <location>
        <begin position="171"/>
        <end position="202"/>
    </location>
</feature>
<feature type="compositionally biased region" description="Basic and acidic residues" evidence="2">
    <location>
        <begin position="171"/>
        <end position="188"/>
    </location>
</feature>
<gene>
    <name evidence="1" type="primary">ureE</name>
    <name type="ordered locus">Bamb_0778</name>
</gene>
<accession>Q0BHN6</accession>
<protein>
    <recommendedName>
        <fullName evidence="1">Urease accessory protein UreE</fullName>
    </recommendedName>
</protein>
<sequence>MRTLDKRIAPNVKLAASLVARAPTLTLAYDARCKSRLAATLDTGEDVAVVLPRGTVLRDGDVLVADDGALVRIAAAPETVLLVRAGDPLTLMRAAYHLGNRHTPVEIGDGYLKLEADPVLADMLRRLGTQVEPTSAPFQPEAGAYGGGHKHGHDATFAEDYALAQQVFGEHHGHSHSHDHDHDHDHQHGPGCTHGHRGHDHH</sequence>
<organism>
    <name type="scientific">Burkholderia ambifaria (strain ATCC BAA-244 / DSM 16087 / CCUG 44356 / LMG 19182 / AMMD)</name>
    <name type="common">Burkholderia cepacia (strain AMMD)</name>
    <dbReference type="NCBI Taxonomy" id="339670"/>
    <lineage>
        <taxon>Bacteria</taxon>
        <taxon>Pseudomonadati</taxon>
        <taxon>Pseudomonadota</taxon>
        <taxon>Betaproteobacteria</taxon>
        <taxon>Burkholderiales</taxon>
        <taxon>Burkholderiaceae</taxon>
        <taxon>Burkholderia</taxon>
        <taxon>Burkholderia cepacia complex</taxon>
    </lineage>
</organism>
<keyword id="KW-0143">Chaperone</keyword>
<keyword id="KW-0963">Cytoplasm</keyword>
<keyword id="KW-0533">Nickel</keyword>
<keyword id="KW-0996">Nickel insertion</keyword>
<reference key="1">
    <citation type="submission" date="2006-08" db="EMBL/GenBank/DDBJ databases">
        <title>Complete sequence of chromosome 1 of Burkholderia cepacia AMMD.</title>
        <authorList>
            <person name="Copeland A."/>
            <person name="Lucas S."/>
            <person name="Lapidus A."/>
            <person name="Barry K."/>
            <person name="Detter J.C."/>
            <person name="Glavina del Rio T."/>
            <person name="Hammon N."/>
            <person name="Israni S."/>
            <person name="Pitluck S."/>
            <person name="Bruce D."/>
            <person name="Chain P."/>
            <person name="Malfatti S."/>
            <person name="Shin M."/>
            <person name="Vergez L."/>
            <person name="Schmutz J."/>
            <person name="Larimer F."/>
            <person name="Land M."/>
            <person name="Hauser L."/>
            <person name="Kyrpides N."/>
            <person name="Kim E."/>
            <person name="Parke J."/>
            <person name="Coenye T."/>
            <person name="Konstantinidis K."/>
            <person name="Ramette A."/>
            <person name="Tiedje J."/>
            <person name="Richardson P."/>
        </authorList>
    </citation>
    <scope>NUCLEOTIDE SEQUENCE [LARGE SCALE GENOMIC DNA]</scope>
    <source>
        <strain>ATCC BAA-244 / DSM 16087 / CCUG 44356 / LMG 19182 / AMMD</strain>
    </source>
</reference>
<evidence type="ECO:0000255" key="1">
    <source>
        <dbReference type="HAMAP-Rule" id="MF_00822"/>
    </source>
</evidence>
<evidence type="ECO:0000256" key="2">
    <source>
        <dbReference type="SAM" id="MobiDB-lite"/>
    </source>
</evidence>
<dbReference type="EMBL" id="CP000440">
    <property type="protein sequence ID" value="ABI86337.1"/>
    <property type="molecule type" value="Genomic_DNA"/>
</dbReference>
<dbReference type="RefSeq" id="WP_011656156.1">
    <property type="nucleotide sequence ID" value="NC_008390.1"/>
</dbReference>
<dbReference type="SMR" id="Q0BHN6"/>
<dbReference type="GeneID" id="93083814"/>
<dbReference type="KEGG" id="bam:Bamb_0778"/>
<dbReference type="PATRIC" id="fig|339670.21.peg.814"/>
<dbReference type="eggNOG" id="COG2371">
    <property type="taxonomic scope" value="Bacteria"/>
</dbReference>
<dbReference type="Proteomes" id="UP000000662">
    <property type="component" value="Chromosome 1"/>
</dbReference>
<dbReference type="GO" id="GO:0005737">
    <property type="term" value="C:cytoplasm"/>
    <property type="evidence" value="ECO:0007669"/>
    <property type="project" value="UniProtKB-SubCell"/>
</dbReference>
<dbReference type="GO" id="GO:0016151">
    <property type="term" value="F:nickel cation binding"/>
    <property type="evidence" value="ECO:0007669"/>
    <property type="project" value="UniProtKB-UniRule"/>
</dbReference>
<dbReference type="GO" id="GO:0051082">
    <property type="term" value="F:unfolded protein binding"/>
    <property type="evidence" value="ECO:0007669"/>
    <property type="project" value="UniProtKB-UniRule"/>
</dbReference>
<dbReference type="GO" id="GO:0006457">
    <property type="term" value="P:protein folding"/>
    <property type="evidence" value="ECO:0007669"/>
    <property type="project" value="InterPro"/>
</dbReference>
<dbReference type="GO" id="GO:0065003">
    <property type="term" value="P:protein-containing complex assembly"/>
    <property type="evidence" value="ECO:0007669"/>
    <property type="project" value="InterPro"/>
</dbReference>
<dbReference type="GO" id="GO:0019627">
    <property type="term" value="P:urea metabolic process"/>
    <property type="evidence" value="ECO:0007669"/>
    <property type="project" value="InterPro"/>
</dbReference>
<dbReference type="CDD" id="cd00571">
    <property type="entry name" value="UreE"/>
    <property type="match status" value="1"/>
</dbReference>
<dbReference type="Gene3D" id="2.60.260.20">
    <property type="entry name" value="Urease metallochaperone UreE, N-terminal domain"/>
    <property type="match status" value="1"/>
</dbReference>
<dbReference type="Gene3D" id="3.30.70.790">
    <property type="entry name" value="UreE, C-terminal domain"/>
    <property type="match status" value="1"/>
</dbReference>
<dbReference type="HAMAP" id="MF_00822">
    <property type="entry name" value="UreE"/>
    <property type="match status" value="1"/>
</dbReference>
<dbReference type="InterPro" id="IPR012406">
    <property type="entry name" value="UreE"/>
</dbReference>
<dbReference type="InterPro" id="IPR007864">
    <property type="entry name" value="UreE_C_dom"/>
</dbReference>
<dbReference type="InterPro" id="IPR004029">
    <property type="entry name" value="UreE_N"/>
</dbReference>
<dbReference type="InterPro" id="IPR036118">
    <property type="entry name" value="UreE_N_sf"/>
</dbReference>
<dbReference type="NCBIfam" id="NF009751">
    <property type="entry name" value="PRK13261.1-1"/>
    <property type="match status" value="1"/>
</dbReference>
<dbReference type="NCBIfam" id="NF009762">
    <property type="entry name" value="PRK13263.1"/>
    <property type="match status" value="1"/>
</dbReference>
<dbReference type="Pfam" id="PF05194">
    <property type="entry name" value="UreE_C"/>
    <property type="match status" value="1"/>
</dbReference>
<dbReference type="Pfam" id="PF02814">
    <property type="entry name" value="UreE_N"/>
    <property type="match status" value="1"/>
</dbReference>
<dbReference type="SMART" id="SM00988">
    <property type="entry name" value="UreE_N"/>
    <property type="match status" value="1"/>
</dbReference>
<dbReference type="SUPFAM" id="SSF69737">
    <property type="entry name" value="Urease metallochaperone UreE, C-terminal domain"/>
    <property type="match status" value="1"/>
</dbReference>
<dbReference type="SUPFAM" id="SSF69287">
    <property type="entry name" value="Urease metallochaperone UreE, N-terminal domain"/>
    <property type="match status" value="1"/>
</dbReference>
<proteinExistence type="inferred from homology"/>